<sequence length="393" mass="44641">MWWRVLSLLAWFPLQEASLTNHTETITVEEGQTLTLKCVTSLRKNSSLQWLTPSGFTIFLNEYPALKNSKYQLLHHSANQLSITVPNVTLQDEGVYKCLHYSDSVSTKEVKVIVLATPFKPILEASVIRKQNGEEHVVLMCSTMRSKPPPQITWLLGNSMEVSGGTLHEFETDGKKCNTTSTLIIHTYGKNSTVDCIIRHRGLQGRKLVAPFRFEDLVTDEETASDALERNSLSSQDPQQPTSTVSVTEDSSTSEIDKEEKEQTTQDPDLTTEANPQYLGLARKKSGILLLTLVSFLIFILFIIVQLFIMKLRKAHVIWKKENEVSEHTLESYRSRSNNEETSSEEKNGQSSHPMRCMNYITKLYSEAKTKRKENVQHSKLEEKHIQVPESIV</sequence>
<keyword id="KW-0002">3D-structure</keyword>
<keyword id="KW-1064">Adaptive immunity</keyword>
<keyword id="KW-0025">Alternative splicing</keyword>
<keyword id="KW-0130">Cell adhesion</keyword>
<keyword id="KW-1003">Cell membrane</keyword>
<keyword id="KW-1015">Disulfide bond</keyword>
<keyword id="KW-0325">Glycoprotein</keyword>
<keyword id="KW-0391">Immunity</keyword>
<keyword id="KW-0393">Immunoglobulin domain</keyword>
<keyword id="KW-0472">Membrane</keyword>
<keyword id="KW-1267">Proteomics identification</keyword>
<keyword id="KW-1185">Reference proteome</keyword>
<keyword id="KW-0677">Repeat</keyword>
<keyword id="KW-0732">Signal</keyword>
<keyword id="KW-0812">Transmembrane</keyword>
<keyword id="KW-1133">Transmembrane helix</keyword>
<name>CRTAM_HUMAN</name>
<accession>O95727</accession>
<accession>Q59EI1</accession>
<accession>Q6IRX2</accession>
<comment type="function">
    <text evidence="1 8">Mediates heterophilic cell-cell adhesion which regulates the activation, differentiation and tissue retention of various T-cell subsets (By similarity). Interaction with CADM1 promotes natural killer (NK) cell cytotoxicity and IFNG/interferon-gamma secretion by CD8+ T-cells in vitro as well as NK cell-mediated rejection of tumors expressing CADM1 in vivo (PubMed:15811952). Regulates CD8+ T-cell proliferation in response to T-cell receptor (TCR) activation (By similarity). Appears to be dispensable for CD8+ T-cell-mediated cytotoxicity (By similarity). Interaction with SCRIB promotes the late phase of cellular polarization of a subset of CD4+ T-cells, which in turn regulates TCR-mediated proliferation and IFNG, IL17 and IL22 production (By similarity). By interacting with CADM1 on CD8+ dendritic cells, regulates the retention of activated CD8+ T-cells within the draining lymph node (By similarity). Required for the intestinal retention of intraepithelial CD4+ CD8+ T-cells and, to a lesser extent, intraepithelial and lamina propria CD8+ T-cells and CD4+ T-cells (By similarity). Interaction with CADM1 promotes the adhesion to gut-associated CD103+ dendritic cells, which may facilitate the expression of gut-homing and adhesion molecules on T-cells and the conversion of CD4+ T-cells into CD4+ CD8+ T-cells (By similarity).</text>
</comment>
<comment type="subunit">
    <text evidence="1 7 8 10 11">Monomer (PubMed:23583034). May form homodimer (via Ig-like V-type domain) (PubMed:23583034, PubMed:23871486). Interacts (via Ig-like V-type domain) with CADM1 (via Ig-like V-type domain); the interaction competes with CRTAM homodimerization and CADM1 homodimerization (PubMed:15781451, PubMed:15811952, PubMed:23871486). Interacts (via PDZ-binding motif) with SCRIB (via PDZ domain 3); the interaction promotes CRTAM and SCRIB polarization in a subset of CD4+ T-cells (By similarity).</text>
</comment>
<comment type="interaction">
    <interactant intactId="EBI-16044697">
        <id>O95727-1</id>
    </interactant>
    <interactant intactId="EBI-5652260">
        <id>Q9BY67</id>
        <label>CADM1</label>
    </interactant>
    <organismsDiffer>false</organismsDiffer>
    <experiments>4</experiments>
</comment>
<comment type="interaction">
    <interactant intactId="EBI-16044697">
        <id>O95727-1</id>
    </interactant>
    <interactant intactId="EBI-16044697">
        <id>O95727-1</id>
        <label>CRTAM</label>
    </interactant>
    <organismsDiffer>false</organismsDiffer>
    <experiments>5</experiments>
</comment>
<comment type="subcellular location">
    <subcellularLocation>
        <location evidence="1">Cell membrane</location>
        <topology evidence="2">Single-pass type I membrane protein</topology>
    </subcellularLocation>
    <text evidence="1">In a subset of CD4+ T-cells, colocalizes with SCRIB at the immunological synapse during the late phase of T-cell activation.</text>
</comment>
<comment type="alternative products">
    <event type="alternative splicing"/>
    <isoform>
        <id>O95727-1</id>
        <name evidence="5">1</name>
        <sequence type="displayed"/>
    </isoform>
    <isoform>
        <id>O95727-2</id>
        <name>2</name>
        <sequence type="described" ref="VSP_052471 VSP_052472"/>
    </isoform>
</comment>
<comment type="tissue specificity">
    <text evidence="5 8 9">In the immune system, expression is restricted to activated class-I MHC-restricted cells, including NKT and CD8 T-cells (PubMed:10811014, PubMed:15811952, PubMed:16300832). Strongly expressed in spleen, thymus, small intestine, peripheral blood leukocyte, and in Purkinje neurons in cerebellum. Expressed at much lower levels in testis, ovary, colon, lung and lymphoid tissues (PubMed:16300832).</text>
</comment>
<comment type="domain">
    <text evidence="1">The extracellular domain is required for the regulation of IFNG and IL22 production, but is dispensable for late T-cell polarization.</text>
</comment>
<comment type="similarity">
    <text evidence="9">Belongs to the nectin family.</text>
</comment>
<comment type="sequence caution" evidence="13">
    <conflict type="erroneous initiation">
        <sequence resource="EMBL-CDS" id="BAD93067"/>
    </conflict>
</comment>
<gene>
    <name evidence="14" type="primary">CRTAM</name>
</gene>
<evidence type="ECO:0000250" key="1">
    <source>
        <dbReference type="UniProtKB" id="Q149L7"/>
    </source>
</evidence>
<evidence type="ECO:0000255" key="2"/>
<evidence type="ECO:0000255" key="3">
    <source>
        <dbReference type="PROSITE-ProRule" id="PRU00114"/>
    </source>
</evidence>
<evidence type="ECO:0000256" key="4">
    <source>
        <dbReference type="SAM" id="MobiDB-lite"/>
    </source>
</evidence>
<evidence type="ECO:0000269" key="5">
    <source>
    </source>
</evidence>
<evidence type="ECO:0000269" key="6">
    <source>
    </source>
</evidence>
<evidence type="ECO:0000269" key="7">
    <source>
    </source>
</evidence>
<evidence type="ECO:0000269" key="8">
    <source>
    </source>
</evidence>
<evidence type="ECO:0000269" key="9">
    <source>
    </source>
</evidence>
<evidence type="ECO:0000269" key="10">
    <source>
    </source>
</evidence>
<evidence type="ECO:0000269" key="11">
    <source>
    </source>
</evidence>
<evidence type="ECO:0000303" key="12">
    <source ref="2"/>
</evidence>
<evidence type="ECO:0000305" key="13"/>
<evidence type="ECO:0000312" key="14">
    <source>
        <dbReference type="EMBL" id="AAC80267.1"/>
    </source>
</evidence>
<evidence type="ECO:0000312" key="15">
    <source>
        <dbReference type="EMBL" id="AAH70266.1"/>
    </source>
</evidence>
<evidence type="ECO:0000312" key="16">
    <source>
        <dbReference type="EMBL" id="BAD93067.1"/>
    </source>
</evidence>
<evidence type="ECO:0007744" key="17">
    <source>
        <dbReference type="PDB" id="3RBG"/>
    </source>
</evidence>
<evidence type="ECO:0007744" key="18">
    <source>
        <dbReference type="PDB" id="4H5S"/>
    </source>
</evidence>
<evidence type="ECO:0007829" key="19">
    <source>
        <dbReference type="PDB" id="4H5S"/>
    </source>
</evidence>
<dbReference type="EMBL" id="AF001622">
    <property type="protein sequence ID" value="AAC80267.1"/>
    <property type="molecule type" value="mRNA"/>
</dbReference>
<dbReference type="EMBL" id="AB209830">
    <property type="protein sequence ID" value="BAD93067.1"/>
    <property type="status" value="ALT_INIT"/>
    <property type="molecule type" value="mRNA"/>
</dbReference>
<dbReference type="EMBL" id="BC070266">
    <property type="protein sequence ID" value="AAH70266.1"/>
    <property type="molecule type" value="mRNA"/>
</dbReference>
<dbReference type="CCDS" id="CCDS76489.1">
    <molecule id="O95727-2"/>
</dbReference>
<dbReference type="CCDS" id="CCDS8437.1">
    <molecule id="O95727-1"/>
</dbReference>
<dbReference type="RefSeq" id="NP_001291711.1">
    <molecule id="O95727-2"/>
    <property type="nucleotide sequence ID" value="NM_001304782.2"/>
</dbReference>
<dbReference type="RefSeq" id="NP_062550.2">
    <molecule id="O95727-1"/>
    <property type="nucleotide sequence ID" value="NM_019604.4"/>
</dbReference>
<dbReference type="PDB" id="3RBG">
    <property type="method" value="X-ray"/>
    <property type="resolution" value="2.30 A"/>
    <property type="chains" value="A/B/C/D=18-117"/>
</dbReference>
<dbReference type="PDB" id="4H5S">
    <property type="method" value="X-ray"/>
    <property type="resolution" value="1.70 A"/>
    <property type="chains" value="A=18-117"/>
</dbReference>
<dbReference type="PDBsum" id="3RBG"/>
<dbReference type="PDBsum" id="4H5S"/>
<dbReference type="SMR" id="O95727"/>
<dbReference type="DIP" id="DIP-60155N"/>
<dbReference type="FunCoup" id="O95727">
    <property type="interactions" value="845"/>
</dbReference>
<dbReference type="IntAct" id="O95727">
    <property type="interactions" value="1"/>
</dbReference>
<dbReference type="STRING" id="9606.ENSP00000227348"/>
<dbReference type="GlyCosmos" id="O95727">
    <property type="glycosylation" value="5 sites, 2 glycans"/>
</dbReference>
<dbReference type="GlyGen" id="O95727">
    <property type="glycosylation" value="5 sites, 2 O-linked glycans (2 sites)"/>
</dbReference>
<dbReference type="iPTMnet" id="O95727"/>
<dbReference type="PhosphoSitePlus" id="O95727"/>
<dbReference type="BioMuta" id="CRTAM"/>
<dbReference type="MassIVE" id="O95727"/>
<dbReference type="PaxDb" id="9606-ENSP00000227348"/>
<dbReference type="PeptideAtlas" id="O95727"/>
<dbReference type="ProteomicsDB" id="51015">
    <molecule id="O95727-1"/>
</dbReference>
<dbReference type="ProteomicsDB" id="51016">
    <molecule id="O95727-2"/>
</dbReference>
<dbReference type="Antibodypedia" id="32807">
    <property type="antibodies" value="268 antibodies from 26 providers"/>
</dbReference>
<dbReference type="DNASU" id="56253"/>
<dbReference type="Ensembl" id="ENST00000227348.9">
    <molecule id="O95727-1"/>
    <property type="protein sequence ID" value="ENSP00000227348.4"/>
    <property type="gene ID" value="ENSG00000109943.9"/>
</dbReference>
<dbReference type="Ensembl" id="ENST00000533709.1">
    <molecule id="O95727-2"/>
    <property type="protein sequence ID" value="ENSP00000433728.1"/>
    <property type="gene ID" value="ENSG00000109943.9"/>
</dbReference>
<dbReference type="GeneID" id="56253"/>
<dbReference type="KEGG" id="hsa:56253"/>
<dbReference type="MANE-Select" id="ENST00000227348.9">
    <property type="protein sequence ID" value="ENSP00000227348.4"/>
    <property type="RefSeq nucleotide sequence ID" value="NM_019604.4"/>
    <property type="RefSeq protein sequence ID" value="NP_062550.2"/>
</dbReference>
<dbReference type="UCSC" id="uc001pyj.4">
    <molecule id="O95727-1"/>
    <property type="organism name" value="human"/>
</dbReference>
<dbReference type="AGR" id="HGNC:24313"/>
<dbReference type="CTD" id="56253"/>
<dbReference type="DisGeNET" id="56253"/>
<dbReference type="GeneCards" id="CRTAM"/>
<dbReference type="HGNC" id="HGNC:24313">
    <property type="gene designation" value="CRTAM"/>
</dbReference>
<dbReference type="HPA" id="ENSG00000109943">
    <property type="expression patterns" value="Tissue enriched (brain)"/>
</dbReference>
<dbReference type="MIM" id="612597">
    <property type="type" value="gene"/>
</dbReference>
<dbReference type="neXtProt" id="NX_O95727"/>
<dbReference type="OpenTargets" id="ENSG00000109943"/>
<dbReference type="PharmGKB" id="PA145149072"/>
<dbReference type="VEuPathDB" id="HostDB:ENSG00000109943"/>
<dbReference type="eggNOG" id="ENOG502RYH2">
    <property type="taxonomic scope" value="Eukaryota"/>
</dbReference>
<dbReference type="GeneTree" id="ENSGT00940000159804"/>
<dbReference type="HOGENOM" id="CLU_061397_0_0_1"/>
<dbReference type="InParanoid" id="O95727"/>
<dbReference type="OMA" id="GVYKCFY"/>
<dbReference type="OrthoDB" id="10006996at2759"/>
<dbReference type="PAN-GO" id="O95727">
    <property type="GO annotations" value="5 GO annotations based on evolutionary models"/>
</dbReference>
<dbReference type="PhylomeDB" id="O95727"/>
<dbReference type="TreeFam" id="TF326804"/>
<dbReference type="PathwayCommons" id="O95727"/>
<dbReference type="Reactome" id="R-HSA-198933">
    <property type="pathway name" value="Immunoregulatory interactions between a Lymphoid and a non-Lymphoid cell"/>
</dbReference>
<dbReference type="SignaLink" id="O95727"/>
<dbReference type="BioGRID-ORCS" id="56253">
    <property type="hits" value="10 hits in 1134 CRISPR screens"/>
</dbReference>
<dbReference type="ChiTaRS" id="CRTAM">
    <property type="organism name" value="human"/>
</dbReference>
<dbReference type="EvolutionaryTrace" id="O95727"/>
<dbReference type="GenomeRNAi" id="56253"/>
<dbReference type="Pharos" id="O95727">
    <property type="development level" value="Tbio"/>
</dbReference>
<dbReference type="PRO" id="PR:O95727"/>
<dbReference type="Proteomes" id="UP000005640">
    <property type="component" value="Chromosome 11"/>
</dbReference>
<dbReference type="RNAct" id="O95727">
    <property type="molecule type" value="protein"/>
</dbReference>
<dbReference type="Bgee" id="ENSG00000109943">
    <property type="expression patterns" value="Expressed in cerebellar vermis and 113 other cell types or tissues"/>
</dbReference>
<dbReference type="GO" id="GO:0001772">
    <property type="term" value="C:immunological synapse"/>
    <property type="evidence" value="ECO:0000250"/>
    <property type="project" value="UniProtKB"/>
</dbReference>
<dbReference type="GO" id="GO:0005886">
    <property type="term" value="C:plasma membrane"/>
    <property type="evidence" value="ECO:0000314"/>
    <property type="project" value="HGNC-UCL"/>
</dbReference>
<dbReference type="GO" id="GO:0042802">
    <property type="term" value="F:identical protein binding"/>
    <property type="evidence" value="ECO:0000353"/>
    <property type="project" value="IntAct"/>
</dbReference>
<dbReference type="GO" id="GO:0005102">
    <property type="term" value="F:signaling receptor binding"/>
    <property type="evidence" value="ECO:0000353"/>
    <property type="project" value="UniProtKB"/>
</dbReference>
<dbReference type="GO" id="GO:0002250">
    <property type="term" value="P:adaptive immune response"/>
    <property type="evidence" value="ECO:0007669"/>
    <property type="project" value="UniProtKB-KW"/>
</dbReference>
<dbReference type="GO" id="GO:0008037">
    <property type="term" value="P:cell recognition"/>
    <property type="evidence" value="ECO:0000314"/>
    <property type="project" value="HGNC-UCL"/>
</dbReference>
<dbReference type="GO" id="GO:0051606">
    <property type="term" value="P:detection of stimulus"/>
    <property type="evidence" value="ECO:0000314"/>
    <property type="project" value="HGNC-UCL"/>
</dbReference>
<dbReference type="GO" id="GO:0002355">
    <property type="term" value="P:detection of tumor cell"/>
    <property type="evidence" value="ECO:0000314"/>
    <property type="project" value="HGNC-UCL"/>
</dbReference>
<dbReference type="GO" id="GO:0001768">
    <property type="term" value="P:establishment of T cell polarity"/>
    <property type="evidence" value="ECO:0000250"/>
    <property type="project" value="UniProtKB"/>
</dbReference>
<dbReference type="GO" id="GO:0007157">
    <property type="term" value="P:heterophilic cell-cell adhesion via plasma membrane cell adhesion molecules"/>
    <property type="evidence" value="ECO:0000250"/>
    <property type="project" value="UniProtKB"/>
</dbReference>
<dbReference type="GO" id="GO:0097021">
    <property type="term" value="P:lymphocyte migration into lymphoid organs"/>
    <property type="evidence" value="ECO:0000250"/>
    <property type="project" value="UniProtKB"/>
</dbReference>
<dbReference type="GO" id="GO:0046007">
    <property type="term" value="P:negative regulation of activated T cell proliferation"/>
    <property type="evidence" value="ECO:0000250"/>
    <property type="project" value="UniProtKB"/>
</dbReference>
<dbReference type="GO" id="GO:0001819">
    <property type="term" value="P:positive regulation of cytokine production"/>
    <property type="evidence" value="ECO:0000314"/>
    <property type="project" value="HGNC-UCL"/>
</dbReference>
<dbReference type="GO" id="GO:0045954">
    <property type="term" value="P:positive regulation of natural killer cell mediated cytotoxicity"/>
    <property type="evidence" value="ECO:0000314"/>
    <property type="project" value="HGNC-UCL"/>
</dbReference>
<dbReference type="GO" id="GO:0002860">
    <property type="term" value="P:positive regulation of natural killer cell mediated cytotoxicity directed against tumor cell target"/>
    <property type="evidence" value="ECO:0000314"/>
    <property type="project" value="HGNC-UCL"/>
</dbReference>
<dbReference type="GO" id="GO:0032729">
    <property type="term" value="P:positive regulation of type II interferon production"/>
    <property type="evidence" value="ECO:0000250"/>
    <property type="project" value="UniProtKB"/>
</dbReference>
<dbReference type="GO" id="GO:2001185">
    <property type="term" value="P:regulation of CD8-positive, alpha-beta T cell activation"/>
    <property type="evidence" value="ECO:0000250"/>
    <property type="project" value="UniProtKB"/>
</dbReference>
<dbReference type="GO" id="GO:0050863">
    <property type="term" value="P:regulation of T cell activation"/>
    <property type="evidence" value="ECO:0000250"/>
    <property type="project" value="UniProtKB"/>
</dbReference>
<dbReference type="GO" id="GO:0045580">
    <property type="term" value="P:regulation of T cell differentiation"/>
    <property type="evidence" value="ECO:0000250"/>
    <property type="project" value="UniProtKB"/>
</dbReference>
<dbReference type="CDD" id="cd05717">
    <property type="entry name" value="IgV_1_Necl_like"/>
    <property type="match status" value="1"/>
</dbReference>
<dbReference type="FunFam" id="2.60.40.10:FF:000013">
    <property type="entry name" value="cell adhesion molecule 1 isoform X1"/>
    <property type="match status" value="1"/>
</dbReference>
<dbReference type="Gene3D" id="2.60.40.10">
    <property type="entry name" value="Immunoglobulins"/>
    <property type="match status" value="2"/>
</dbReference>
<dbReference type="InterPro" id="IPR013162">
    <property type="entry name" value="CD80_C2-set"/>
</dbReference>
<dbReference type="InterPro" id="IPR053096">
    <property type="entry name" value="CRTAM"/>
</dbReference>
<dbReference type="InterPro" id="IPR007110">
    <property type="entry name" value="Ig-like_dom"/>
</dbReference>
<dbReference type="InterPro" id="IPR036179">
    <property type="entry name" value="Ig-like_dom_sf"/>
</dbReference>
<dbReference type="InterPro" id="IPR013783">
    <property type="entry name" value="Ig-like_fold"/>
</dbReference>
<dbReference type="InterPro" id="IPR003599">
    <property type="entry name" value="Ig_sub"/>
</dbReference>
<dbReference type="InterPro" id="IPR013106">
    <property type="entry name" value="Ig_V-set"/>
</dbReference>
<dbReference type="PANTHER" id="PTHR47118">
    <property type="entry name" value="CYTOTOXIC AND REGULATORY T-CELL MOLECULE"/>
    <property type="match status" value="1"/>
</dbReference>
<dbReference type="PANTHER" id="PTHR47118:SF1">
    <property type="entry name" value="CYTOTOXIC AND REGULATORY T-CELL MOLECULE"/>
    <property type="match status" value="1"/>
</dbReference>
<dbReference type="Pfam" id="PF08205">
    <property type="entry name" value="C2-set_2"/>
    <property type="match status" value="1"/>
</dbReference>
<dbReference type="Pfam" id="PF07686">
    <property type="entry name" value="V-set"/>
    <property type="match status" value="1"/>
</dbReference>
<dbReference type="SMART" id="SM00409">
    <property type="entry name" value="IG"/>
    <property type="match status" value="1"/>
</dbReference>
<dbReference type="SUPFAM" id="SSF48726">
    <property type="entry name" value="Immunoglobulin"/>
    <property type="match status" value="2"/>
</dbReference>
<dbReference type="PROSITE" id="PS50835">
    <property type="entry name" value="IG_LIKE"/>
    <property type="match status" value="2"/>
</dbReference>
<protein>
    <recommendedName>
        <fullName>Cytotoxic and regulatory T-cell molecule</fullName>
    </recommendedName>
    <alternativeName>
        <fullName>Class-I MHC-restricted T-cell-associated molecule</fullName>
    </alternativeName>
    <cdAntigenName>CD355</cdAntigenName>
</protein>
<reference evidence="13 14" key="1">
    <citation type="journal article" date="2000" name="J. Leukoc. Biol.">
        <title>A molecular analysis of NKT cells: identification of a class-I restricted T cell-associated molecule (CRTAM).</title>
        <authorList>
            <person name="Kennedy J."/>
            <person name="Vicari A.P."/>
            <person name="Saylor V."/>
            <person name="Zurawski S.M."/>
            <person name="Copeland N.G."/>
            <person name="Gilbert D.J."/>
            <person name="Jenkins N.A."/>
            <person name="Zlotnik A."/>
        </authorList>
    </citation>
    <scope>NUCLEOTIDE SEQUENCE [MRNA] (ISOFORM 1)</scope>
    <scope>TISSUE SPECIFICITY</scope>
    <scope>VARIANT ARG-321</scope>
</reference>
<reference evidence="13 16" key="2">
    <citation type="submission" date="2005-03" db="EMBL/GenBank/DDBJ databases">
        <authorList>
            <person name="Totoki Y."/>
            <person name="Toyoda A."/>
            <person name="Takeda T."/>
            <person name="Sakaki Y."/>
            <person name="Tanaka A."/>
            <person name="Yokoyama S."/>
            <person name="Ohara O."/>
            <person name="Nagase T."/>
            <person name="Kikuno R.F."/>
        </authorList>
    </citation>
    <scope>NUCLEOTIDE SEQUENCE [LARGE SCALE MRNA] (ISOFORM 2)</scope>
    <source>
        <tissue evidence="16">Brain</tissue>
    </source>
</reference>
<reference evidence="13 15" key="3">
    <citation type="journal article" date="2004" name="Genome Res.">
        <title>The status, quality, and expansion of the NIH full-length cDNA project: the Mammalian Gene Collection (MGC).</title>
        <authorList>
            <consortium name="The MGC Project Team"/>
        </authorList>
    </citation>
    <scope>NUCLEOTIDE SEQUENCE [LARGE SCALE MRNA] (ISOFORM 1)</scope>
    <scope>VARIANT GLY-368</scope>
    <source>
        <tissue evidence="15">Peripheral blood</tissue>
    </source>
</reference>
<reference evidence="13" key="4">
    <citation type="journal article" date="2005" name="Blood">
        <title>The tumor suppressor TSLC1/NECL-2 triggers NK-cell and CD8+ T-cell responses through the cell-surface receptor CRTAM.</title>
        <authorList>
            <person name="Boles K.S."/>
            <person name="Barchet W."/>
            <person name="Diacovo T."/>
            <person name="Cella M."/>
            <person name="Colonna M."/>
        </authorList>
    </citation>
    <scope>FUNCTION</scope>
    <scope>INTERACTION WITH CADM1</scope>
    <scope>TISSUE SPECIFICITY</scope>
</reference>
<reference evidence="13" key="5">
    <citation type="journal article" date="2005" name="J. Biol. Chem.">
        <title>Nectin-like protein 2 defines a subset of T-cell zone dendritic cells and is a ligand for class-I-restricted T-cell-associated molecule.</title>
        <authorList>
            <person name="Galibert L."/>
            <person name="Diemer G.S."/>
            <person name="Liu Z."/>
            <person name="Johnson R.S."/>
            <person name="Smith J.L."/>
            <person name="Walzer T."/>
            <person name="Comeau M.R."/>
            <person name="Rauch C.T."/>
            <person name="Wolfson M.F."/>
            <person name="Sorensen R.A."/>
            <person name="Van der Vuurst de Vries A.-R."/>
            <person name="Branstetter D.G."/>
            <person name="Koelling R.M."/>
            <person name="Scholler J."/>
            <person name="Fanslow W.C."/>
            <person name="Baum P.R."/>
            <person name="Derry J.M."/>
            <person name="Yan W."/>
        </authorList>
    </citation>
    <scope>INTERACTION WITH CADM1</scope>
</reference>
<reference evidence="13" key="6">
    <citation type="journal article" date="2006" name="J. Neuroimmunol.">
        <title>Human class-I restricted T cell associated molecule is highly expressed in the cerebellum and is a marker for activated NKT and CD8+ T lymphocytes.</title>
        <authorList>
            <person name="Patino-Lopez G."/>
            <person name="Hevezi P."/>
            <person name="Lee J."/>
            <person name="Willhite D."/>
            <person name="Verge G.M."/>
            <person name="Lechner S.M."/>
            <person name="Ortiz-Navarrete V."/>
            <person name="Zlotnik A."/>
        </authorList>
    </citation>
    <scope>TISSUE SPECIFICITY</scope>
</reference>
<reference evidence="17" key="7">
    <citation type="journal article" date="2013" name="Structure">
        <title>Functional classification of immune regulatory proteins.</title>
        <authorList>
            <person name="Rubinstein R."/>
            <person name="Ramagopal U.A."/>
            <person name="Nathenson S.G."/>
            <person name="Almo S.C."/>
            <person name="Fiser A."/>
        </authorList>
    </citation>
    <scope>X-RAY CRYSTALLOGRAPHY (2.30 ANGSTROMS) OF 18-117</scope>
    <scope>SUBUNIT</scope>
    <scope>DISULFIDE BOND</scope>
</reference>
<reference evidence="18" key="8">
    <citation type="journal article" date="2013" name="Structure">
        <title>Competition of cell adhesion and immune recognition: insights into the interaction between CRTAM and nectin-like 2.</title>
        <authorList>
            <person name="Zhang S."/>
            <person name="Lu G."/>
            <person name="Qi J."/>
            <person name="Li Y."/>
            <person name="Zhang Z."/>
            <person name="Zhang B."/>
            <person name="Fan Z."/>
            <person name="Yan J."/>
            <person name="Gao G.F."/>
        </authorList>
    </citation>
    <scope>X-RAY CRYSTALLOGRAPHY (1.70 ANGSTROMS) OF 18-117</scope>
    <scope>SUBUNIT</scope>
    <scope>INTERACTION WITH CADM1</scope>
    <scope>DISULFIDE BOND</scope>
    <scope>MUTAGENESIS OF PHE-56; THR-57; LYS-67 AND TYR-101</scope>
</reference>
<proteinExistence type="evidence at protein level"/>
<feature type="signal peptide" evidence="2">
    <location>
        <begin position="1"/>
        <end position="17"/>
    </location>
</feature>
<feature type="chain" id="PRO_0000292602" description="Cytotoxic and regulatory T-cell molecule">
    <location>
        <begin position="18"/>
        <end position="393"/>
    </location>
</feature>
<feature type="topological domain" description="Extracellular" evidence="2">
    <location>
        <begin position="18"/>
        <end position="287"/>
    </location>
</feature>
<feature type="transmembrane region" description="Helical" evidence="2">
    <location>
        <begin position="288"/>
        <end position="308"/>
    </location>
</feature>
<feature type="topological domain" description="Cytoplasmic" evidence="2">
    <location>
        <begin position="309"/>
        <end position="393"/>
    </location>
</feature>
<feature type="domain" description="Ig-like V-type" evidence="2">
    <location>
        <begin position="18"/>
        <end position="114"/>
    </location>
</feature>
<feature type="domain" description="Ig-like C2-type" evidence="2">
    <location>
        <begin position="118"/>
        <end position="210"/>
    </location>
</feature>
<feature type="region of interest" description="Disordered" evidence="4">
    <location>
        <begin position="225"/>
        <end position="273"/>
    </location>
</feature>
<feature type="region of interest" description="Disordered" evidence="4">
    <location>
        <begin position="328"/>
        <end position="354"/>
    </location>
</feature>
<feature type="region of interest" description="Disordered" evidence="4">
    <location>
        <begin position="374"/>
        <end position="393"/>
    </location>
</feature>
<feature type="short sequence motif" description="PDZ-binding" evidence="1">
    <location>
        <begin position="390"/>
        <end position="393"/>
    </location>
</feature>
<feature type="compositionally biased region" description="Polar residues" evidence="4">
    <location>
        <begin position="231"/>
        <end position="241"/>
    </location>
</feature>
<feature type="compositionally biased region" description="Low complexity" evidence="4">
    <location>
        <begin position="242"/>
        <end position="254"/>
    </location>
</feature>
<feature type="compositionally biased region" description="Basic and acidic residues" evidence="4">
    <location>
        <begin position="255"/>
        <end position="264"/>
    </location>
</feature>
<feature type="compositionally biased region" description="Basic and acidic residues" evidence="4">
    <location>
        <begin position="328"/>
        <end position="348"/>
    </location>
</feature>
<feature type="compositionally biased region" description="Basic and acidic residues" evidence="4">
    <location>
        <begin position="374"/>
        <end position="387"/>
    </location>
</feature>
<feature type="glycosylation site" description="N-linked (GlcNAc...) asparagine" evidence="2">
    <location>
        <position position="21"/>
    </location>
</feature>
<feature type="glycosylation site" description="N-linked (GlcNAc...) asparagine" evidence="2">
    <location>
        <position position="87"/>
    </location>
</feature>
<feature type="glycosylation site" description="N-linked (GlcNAc...) asparagine" evidence="2">
    <location>
        <position position="178"/>
    </location>
</feature>
<feature type="disulfide bond" evidence="3 10 11 17 18">
    <location>
        <begin position="38"/>
        <end position="98"/>
    </location>
</feature>
<feature type="disulfide bond" evidence="3">
    <location>
        <begin position="141"/>
        <end position="196"/>
    </location>
</feature>
<feature type="splice variant" id="VSP_052471" description="In isoform 2." evidence="12">
    <location>
        <begin position="1"/>
        <end position="199"/>
    </location>
</feature>
<feature type="splice variant" id="VSP_052472" description="In isoform 2." evidence="12">
    <original>HRGLQGRKLVAPFRFED</original>
    <variation>MWVKLLSIVAEFCFSPF</variation>
    <location>
        <begin position="200"/>
        <end position="216"/>
    </location>
</feature>
<feature type="sequence variant" id="VAR_049868" description="In dbSNP:rs35411582.">
    <original>E</original>
    <variation>A</variation>
    <location>
        <position position="16"/>
    </location>
</feature>
<feature type="sequence variant" id="VAR_049869" description="In dbSNP:rs34397316.">
    <original>A</original>
    <variation>D</variation>
    <location>
        <position position="78"/>
    </location>
</feature>
<feature type="sequence variant" id="VAR_049870" description="In dbSNP:rs35136295.">
    <original>D</original>
    <variation>G</variation>
    <location>
        <position position="173"/>
    </location>
</feature>
<feature type="sequence variant" id="VAR_032999" description="In dbSNP:rs2272094." evidence="5">
    <original>K</original>
    <variation>R</variation>
    <location>
        <position position="321"/>
    </location>
</feature>
<feature type="sequence variant" id="VAR_033000" description="In dbSNP:rs1916036." evidence="6">
    <original>A</original>
    <variation>G</variation>
    <location>
        <position position="368"/>
    </location>
</feature>
<feature type="mutagenesis site" description="Reduced binding to CADM1. Severely impairs interaction with CADM1; when associated with A-57, A-67 and A-101." evidence="11">
    <original>F</original>
    <variation>A</variation>
    <location>
        <position position="56"/>
    </location>
</feature>
<feature type="mutagenesis site" description="Reduced binding to CADM1. Severely impairs interaction with CADM1; when associated with A-56, A-67 and A-101." evidence="11">
    <original>T</original>
    <variation>A</variation>
    <location>
        <position position="57"/>
    </location>
</feature>
<feature type="mutagenesis site" description="Reduced binding to CADM1. Severely impairs interaction with CADM1; when associated with A-56, A-57 and A-101." evidence="11">
    <original>K</original>
    <variation>A</variation>
    <location>
        <position position="67"/>
    </location>
</feature>
<feature type="mutagenesis site" description="Reduced binding to CADM1. Severely impairs interaction with CADM1; when associated with A-56, A-57 and A-67." evidence="11">
    <original>Y</original>
    <variation>A</variation>
    <location>
        <position position="101"/>
    </location>
</feature>
<feature type="sequence conflict" description="In Ref. 3; AAH70266." evidence="13" ref="3">
    <original>A</original>
    <variation>V</variation>
    <location>
        <position position="65"/>
    </location>
</feature>
<feature type="sequence conflict" description="In Ref. 3; AAH70266." evidence="13" ref="3">
    <original>A</original>
    <variation>T</variation>
    <location>
        <position position="315"/>
    </location>
</feature>
<feature type="strand" evidence="19">
    <location>
        <begin position="24"/>
        <end position="29"/>
    </location>
</feature>
<feature type="strand" evidence="19">
    <location>
        <begin position="34"/>
        <end position="39"/>
    </location>
</feature>
<feature type="strand" evidence="19">
    <location>
        <begin position="47"/>
        <end position="51"/>
    </location>
</feature>
<feature type="strand" evidence="19">
    <location>
        <begin position="57"/>
        <end position="60"/>
    </location>
</feature>
<feature type="strand" evidence="19">
    <location>
        <begin position="72"/>
        <end position="77"/>
    </location>
</feature>
<feature type="strand" evidence="19">
    <location>
        <begin position="80"/>
        <end position="85"/>
    </location>
</feature>
<feature type="helix" evidence="19">
    <location>
        <begin position="90"/>
        <end position="92"/>
    </location>
</feature>
<feature type="strand" evidence="19">
    <location>
        <begin position="94"/>
        <end position="115"/>
    </location>
</feature>
<organism>
    <name type="scientific">Homo sapiens</name>
    <name type="common">Human</name>
    <dbReference type="NCBI Taxonomy" id="9606"/>
    <lineage>
        <taxon>Eukaryota</taxon>
        <taxon>Metazoa</taxon>
        <taxon>Chordata</taxon>
        <taxon>Craniata</taxon>
        <taxon>Vertebrata</taxon>
        <taxon>Euteleostomi</taxon>
        <taxon>Mammalia</taxon>
        <taxon>Eutheria</taxon>
        <taxon>Euarchontoglires</taxon>
        <taxon>Primates</taxon>
        <taxon>Haplorrhini</taxon>
        <taxon>Catarrhini</taxon>
        <taxon>Hominidae</taxon>
        <taxon>Homo</taxon>
    </lineage>
</organism>